<accession>P23015</accession>
<dbReference type="EC" id="2.7.1.19"/>
<dbReference type="EMBL" id="X17252">
    <property type="protein sequence ID" value="CAA35119.1"/>
    <property type="molecule type" value="Genomic_DNA"/>
</dbReference>
<dbReference type="PIR" id="B45867">
    <property type="entry name" value="KIQXPR"/>
</dbReference>
<dbReference type="SMR" id="P23015"/>
<dbReference type="UniPathway" id="UPA00116"/>
<dbReference type="GO" id="GO:0005524">
    <property type="term" value="F:ATP binding"/>
    <property type="evidence" value="ECO:0007669"/>
    <property type="project" value="UniProtKB-KW"/>
</dbReference>
<dbReference type="GO" id="GO:0008974">
    <property type="term" value="F:phosphoribulokinase activity"/>
    <property type="evidence" value="ECO:0007669"/>
    <property type="project" value="UniProtKB-EC"/>
</dbReference>
<dbReference type="GO" id="GO:0019253">
    <property type="term" value="P:reductive pentose-phosphate cycle"/>
    <property type="evidence" value="ECO:0007669"/>
    <property type="project" value="UniProtKB-UniPathway"/>
</dbReference>
<dbReference type="Gene3D" id="3.40.50.300">
    <property type="entry name" value="P-loop containing nucleotide triphosphate hydrolases"/>
    <property type="match status" value="1"/>
</dbReference>
<dbReference type="InterPro" id="IPR027417">
    <property type="entry name" value="P-loop_NTPase"/>
</dbReference>
<dbReference type="InterPro" id="IPR006082">
    <property type="entry name" value="PRK"/>
</dbReference>
<dbReference type="InterPro" id="IPR006083">
    <property type="entry name" value="PRK/URK"/>
</dbReference>
<dbReference type="NCBIfam" id="NF011997">
    <property type="entry name" value="PRK15453.1"/>
    <property type="match status" value="1"/>
</dbReference>
<dbReference type="Pfam" id="PF00485">
    <property type="entry name" value="PRK"/>
    <property type="match status" value="1"/>
</dbReference>
<dbReference type="PRINTS" id="PR00478">
    <property type="entry name" value="PHRIBLKINASE"/>
</dbReference>
<dbReference type="SUPFAM" id="SSF52540">
    <property type="entry name" value="P-loop containing nucleoside triphosphate hydrolases"/>
    <property type="match status" value="1"/>
</dbReference>
<dbReference type="PROSITE" id="PS00567">
    <property type="entry name" value="PHOSPHORIBULOKINASE"/>
    <property type="match status" value="1"/>
</dbReference>
<organism>
    <name type="scientific">Xanthobacter flavus</name>
    <dbReference type="NCBI Taxonomy" id="281"/>
    <lineage>
        <taxon>Bacteria</taxon>
        <taxon>Pseudomonadati</taxon>
        <taxon>Pseudomonadota</taxon>
        <taxon>Alphaproteobacteria</taxon>
        <taxon>Hyphomicrobiales</taxon>
        <taxon>Xanthobacteraceae</taxon>
        <taxon>Xanthobacter</taxon>
    </lineage>
</organism>
<gene>
    <name type="primary">cbbP</name>
    <name type="synonym">cfxP</name>
</gene>
<protein>
    <recommendedName>
        <fullName>Phosphoribulokinase</fullName>
        <shortName>PRK</shortName>
        <shortName>PRKase</shortName>
        <ecNumber>2.7.1.19</ecNumber>
    </recommendedName>
    <alternativeName>
        <fullName>Phosphopentokinase</fullName>
    </alternativeName>
</protein>
<evidence type="ECO:0000250" key="1"/>
<evidence type="ECO:0000305" key="2"/>
<proteinExistence type="inferred from homology"/>
<comment type="catalytic activity">
    <reaction>
        <text>D-ribulose 5-phosphate + ATP = D-ribulose 1,5-bisphosphate + ADP + H(+)</text>
        <dbReference type="Rhea" id="RHEA:19365"/>
        <dbReference type="ChEBI" id="CHEBI:15378"/>
        <dbReference type="ChEBI" id="CHEBI:30616"/>
        <dbReference type="ChEBI" id="CHEBI:57870"/>
        <dbReference type="ChEBI" id="CHEBI:58121"/>
        <dbReference type="ChEBI" id="CHEBI:456216"/>
        <dbReference type="EC" id="2.7.1.19"/>
    </reaction>
</comment>
<comment type="pathway">
    <text>Carbohydrate biosynthesis; Calvin cycle.</text>
</comment>
<comment type="subunit">
    <text>Homooctamer.</text>
</comment>
<comment type="similarity">
    <text evidence="2">Belongs to the phosphoribulokinase family.</text>
</comment>
<sequence>MSIKHPIIVVTGSSGAGTTSVKRTFEQIFYREKVKAAFVEGDSFHRYDRYEMRELMAAEAAKGNKHFSHFSPETNRLDDLAQLFKDYGATGSGRFRHYVHDAGEAKLYNTEPGRFTDWEDLEQGTDILFYEGLHGAVVTDELNLAQHADLKIGVVPVINLEWIQKIHRDKATRGYTTEDVTDTIMRRMPDYVRYICPQFTETDINFQRVPTVDTSNPFVARWIPTPDESMVVIRFRDPHGIDFPYLLSMIHNSFMSRANSIVIPGNKQDLAMQLLLTPLIMKLMDRKRRAG</sequence>
<name>KPPR_XANFL</name>
<feature type="chain" id="PRO_0000201960" description="Phosphoribulokinase">
    <location>
        <begin position="1"/>
        <end position="291"/>
    </location>
</feature>
<feature type="binding site" evidence="1">
    <location>
        <begin position="12"/>
        <end position="20"/>
    </location>
    <ligand>
        <name>ATP</name>
        <dbReference type="ChEBI" id="CHEBI:30616"/>
    </ligand>
</feature>
<keyword id="KW-0067">ATP-binding</keyword>
<keyword id="KW-0113">Calvin cycle</keyword>
<keyword id="KW-0418">Kinase</keyword>
<keyword id="KW-0547">Nucleotide-binding</keyword>
<keyword id="KW-0808">Transferase</keyword>
<reference key="1">
    <citation type="journal article" date="1990" name="J. Gen. Microbiol.">
        <title>Nucleotide sequences of the genes encoding fructosebisphosphatase and phosphoribulokinase from Xanthobacter flavus H4-14.</title>
        <authorList>
            <person name="Meijer W.G."/>
            <person name="Enequist H.G."/>
            <person name="Terpstra P."/>
            <person name="Dijkhuizen L."/>
        </authorList>
    </citation>
    <scope>NUCLEOTIDE SEQUENCE [GENOMIC DNA]</scope>
    <source>
        <strain>H4-14</strain>
    </source>
</reference>
<reference key="2">
    <citation type="journal article" date="1991" name="Mol. Gen. Genet.">
        <title>Identification and organization of carbon dioxide fixation genes in Xanthobacter flavus H4-14.</title>
        <authorList>
            <person name="Meijer W.G."/>
            <person name="Arnberg A.C."/>
            <person name="Enequist H.G."/>
            <person name="Terpstra P."/>
            <person name="Lidstrom M.E."/>
            <person name="Dijkhuizen L."/>
        </authorList>
    </citation>
    <scope>NUCLEOTIDE SEQUENCE [GENOMIC DNA]</scope>
    <source>
        <strain>H4-14</strain>
    </source>
</reference>